<proteinExistence type="inferred from homology"/>
<reference key="1">
    <citation type="journal article" date="2008" name="Antimicrob. Agents Chemother.">
        <title>Mutated response regulator graR is responsible for phenotypic conversion of Staphylococcus aureus from heterogeneous vancomycin-intermediate resistance to vancomycin-intermediate resistance.</title>
        <authorList>
            <person name="Neoh H.-M."/>
            <person name="Cui L."/>
            <person name="Yuzawa H."/>
            <person name="Takeuchi F."/>
            <person name="Matsuo M."/>
            <person name="Hiramatsu K."/>
        </authorList>
    </citation>
    <scope>NUCLEOTIDE SEQUENCE [LARGE SCALE GENOMIC DNA]</scope>
    <source>
        <strain>Mu3 / ATCC 700698</strain>
    </source>
</reference>
<sequence>MNNLKWVAYFLKSRMNWIFWILFLNLLMLGISLIDYDFPIDSLFYIVSLNLSLTMIFLILTYFKEVKLYKHFDKDKEIEEIKHKDLAETPFQRHTVDYLYRQISAHKEKVVEQQLQLNMHEQTITEFVHDIKTPVTAMKLLIDQEKNQERKQALLYEWSRINSMLDTQLYITRLESQRKDMYFDYVSLKRMVIDEIQLTRHISQVKGIGFDVDFKVDDYVYTDTKWCRMIIRQILSNALKYSENFNIEIGTELNDQHVSLYIKDYGRGISKKDMPRIFERGFTSTANRNETTSSGMGLYLVNSVKDQLGIHLQVTSTVGKGTTVRLIFPLQNEIVERMSEVTNLSF</sequence>
<comment type="function">
    <text evidence="1">Member of the two-component regulatory system GraR/GraS involved in resistance against cationic antimicrobial peptides (CAMPs). Functions as a sensor protein kinase which phosphorylates GraR through the auxiliary protein GraX. In turn, GraR up-regulates many genes such as adhesins, exoproteins, transporters, toxins, and proteins involved in cell wall synthesis. Down-regulates the expression of many genes involved in RNA and amino acid synthesis or glycolysis.</text>
</comment>
<comment type="catalytic activity">
    <reaction>
        <text>ATP + protein L-histidine = ADP + protein N-phospho-L-histidine.</text>
        <dbReference type="EC" id="2.7.13.3"/>
    </reaction>
</comment>
<comment type="subunit">
    <text evidence="1">Interacts with GraX.</text>
</comment>
<comment type="subcellular location">
    <subcellularLocation>
        <location evidence="4">Cell membrane</location>
        <topology evidence="4">Multi-pass membrane protein</topology>
    </subcellularLocation>
</comment>
<dbReference type="EC" id="2.7.13.3"/>
<dbReference type="EMBL" id="AP009324">
    <property type="protein sequence ID" value="BAF77540.1"/>
    <property type="molecule type" value="Genomic_DNA"/>
</dbReference>
<dbReference type="RefSeq" id="WP_001061264.1">
    <property type="nucleotide sequence ID" value="NC_009782.1"/>
</dbReference>
<dbReference type="SMR" id="A7WZC5"/>
<dbReference type="KEGG" id="saw:SAHV_0657"/>
<dbReference type="HOGENOM" id="CLU_000445_13_1_9"/>
<dbReference type="GO" id="GO:0005886">
    <property type="term" value="C:plasma membrane"/>
    <property type="evidence" value="ECO:0007669"/>
    <property type="project" value="UniProtKB-SubCell"/>
</dbReference>
<dbReference type="GO" id="GO:0005524">
    <property type="term" value="F:ATP binding"/>
    <property type="evidence" value="ECO:0007669"/>
    <property type="project" value="UniProtKB-KW"/>
</dbReference>
<dbReference type="GO" id="GO:0004721">
    <property type="term" value="F:phosphoprotein phosphatase activity"/>
    <property type="evidence" value="ECO:0007669"/>
    <property type="project" value="TreeGrafter"/>
</dbReference>
<dbReference type="GO" id="GO:0000155">
    <property type="term" value="F:phosphorelay sensor kinase activity"/>
    <property type="evidence" value="ECO:0007669"/>
    <property type="project" value="InterPro"/>
</dbReference>
<dbReference type="GO" id="GO:0016036">
    <property type="term" value="P:cellular response to phosphate starvation"/>
    <property type="evidence" value="ECO:0007669"/>
    <property type="project" value="TreeGrafter"/>
</dbReference>
<dbReference type="GO" id="GO:0046677">
    <property type="term" value="P:response to antibiotic"/>
    <property type="evidence" value="ECO:0007669"/>
    <property type="project" value="UniProtKB-KW"/>
</dbReference>
<dbReference type="Gene3D" id="3.30.565.10">
    <property type="entry name" value="Histidine kinase-like ATPase, C-terminal domain"/>
    <property type="match status" value="1"/>
</dbReference>
<dbReference type="InterPro" id="IPR050351">
    <property type="entry name" value="2-comp_sensor_kinase"/>
</dbReference>
<dbReference type="InterPro" id="IPR036890">
    <property type="entry name" value="HATPase_C_sf"/>
</dbReference>
<dbReference type="InterPro" id="IPR005467">
    <property type="entry name" value="His_kinase_dom"/>
</dbReference>
<dbReference type="InterPro" id="IPR036097">
    <property type="entry name" value="HisK_dim/P_sf"/>
</dbReference>
<dbReference type="InterPro" id="IPR004358">
    <property type="entry name" value="Sig_transdc_His_kin-like_C"/>
</dbReference>
<dbReference type="PANTHER" id="PTHR45453:SF2">
    <property type="entry name" value="HISTIDINE KINASE"/>
    <property type="match status" value="1"/>
</dbReference>
<dbReference type="PANTHER" id="PTHR45453">
    <property type="entry name" value="PHOSPHATE REGULON SENSOR PROTEIN PHOR"/>
    <property type="match status" value="1"/>
</dbReference>
<dbReference type="Pfam" id="PF02518">
    <property type="entry name" value="HATPase_c"/>
    <property type="match status" value="1"/>
</dbReference>
<dbReference type="PRINTS" id="PR00344">
    <property type="entry name" value="BCTRLSENSOR"/>
</dbReference>
<dbReference type="SMART" id="SM00387">
    <property type="entry name" value="HATPase_c"/>
    <property type="match status" value="1"/>
</dbReference>
<dbReference type="SUPFAM" id="SSF55874">
    <property type="entry name" value="ATPase domain of HSP90 chaperone/DNA topoisomerase II/histidine kinase"/>
    <property type="match status" value="1"/>
</dbReference>
<dbReference type="SUPFAM" id="SSF47384">
    <property type="entry name" value="Homodimeric domain of signal transducing histidine kinase"/>
    <property type="match status" value="1"/>
</dbReference>
<dbReference type="PROSITE" id="PS50109">
    <property type="entry name" value="HIS_KIN"/>
    <property type="match status" value="1"/>
</dbReference>
<name>GRAS_STAA1</name>
<feature type="chain" id="PRO_0000347919" description="Sensor protein kinase GraS">
    <location>
        <begin position="1"/>
        <end position="346"/>
    </location>
</feature>
<feature type="transmembrane region" description="Helical" evidence="2">
    <location>
        <begin position="15"/>
        <end position="35"/>
    </location>
</feature>
<feature type="transmembrane region" description="Helical" evidence="2">
    <location>
        <begin position="43"/>
        <end position="63"/>
    </location>
</feature>
<feature type="domain" description="Histidine kinase" evidence="3">
    <location>
        <begin position="126"/>
        <end position="332"/>
    </location>
</feature>
<accession>A7WZC5</accession>
<organism>
    <name type="scientific">Staphylococcus aureus (strain Mu3 / ATCC 700698)</name>
    <dbReference type="NCBI Taxonomy" id="418127"/>
    <lineage>
        <taxon>Bacteria</taxon>
        <taxon>Bacillati</taxon>
        <taxon>Bacillota</taxon>
        <taxon>Bacilli</taxon>
        <taxon>Bacillales</taxon>
        <taxon>Staphylococcaceae</taxon>
        <taxon>Staphylococcus</taxon>
    </lineage>
</organism>
<evidence type="ECO:0000250" key="1">
    <source>
        <dbReference type="UniProtKB" id="Q2G0D9"/>
    </source>
</evidence>
<evidence type="ECO:0000255" key="2"/>
<evidence type="ECO:0000255" key="3">
    <source>
        <dbReference type="PROSITE-ProRule" id="PRU00107"/>
    </source>
</evidence>
<evidence type="ECO:0000305" key="4"/>
<protein>
    <recommendedName>
        <fullName>Sensor protein kinase GraS</fullName>
        <ecNumber>2.7.13.3</ecNumber>
    </recommendedName>
    <alternativeName>
        <fullName>Glycopeptide resistance-associated protein S</fullName>
    </alternativeName>
</protein>
<gene>
    <name type="primary">graS</name>
    <name type="ordered locus">SAHV_0657</name>
</gene>
<keyword id="KW-0046">Antibiotic resistance</keyword>
<keyword id="KW-0067">ATP-binding</keyword>
<keyword id="KW-1003">Cell membrane</keyword>
<keyword id="KW-0418">Kinase</keyword>
<keyword id="KW-0472">Membrane</keyword>
<keyword id="KW-0547">Nucleotide-binding</keyword>
<keyword id="KW-0808">Transferase</keyword>
<keyword id="KW-0812">Transmembrane</keyword>
<keyword id="KW-1133">Transmembrane helix</keyword>
<keyword id="KW-0902">Two-component regulatory system</keyword>
<keyword id="KW-0843">Virulence</keyword>